<proteinExistence type="evidence at protein level"/>
<reference key="1">
    <citation type="journal article" date="2002" name="Cell Growth Differ.">
        <title>Pcp1p, a Spc110p-related calmodulin target at the centrosome of the fission yeast Schizosaccharomyces pombe.</title>
        <authorList>
            <person name="Flory M.R."/>
            <person name="Morphew M."/>
            <person name="Joseph J.D."/>
            <person name="Means A.R."/>
            <person name="Davis T.N."/>
        </authorList>
    </citation>
    <scope>NUCLEOTIDE SEQUENCE [GENOMIC DNA]</scope>
    <scope>FUNCTION</scope>
    <scope>SUBCELLULAR LOCATION</scope>
</reference>
<reference key="2">
    <citation type="journal article" date="2002" name="Nature">
        <title>The genome sequence of Schizosaccharomyces pombe.</title>
        <authorList>
            <person name="Wood V."/>
            <person name="Gwilliam R."/>
            <person name="Rajandream M.A."/>
            <person name="Lyne M.H."/>
            <person name="Lyne R."/>
            <person name="Stewart A."/>
            <person name="Sgouros J.G."/>
            <person name="Peat N."/>
            <person name="Hayles J."/>
            <person name="Baker S.G."/>
            <person name="Basham D."/>
            <person name="Bowman S."/>
            <person name="Brooks K."/>
            <person name="Brown D."/>
            <person name="Brown S."/>
            <person name="Chillingworth T."/>
            <person name="Churcher C.M."/>
            <person name="Collins M."/>
            <person name="Connor R."/>
            <person name="Cronin A."/>
            <person name="Davis P."/>
            <person name="Feltwell T."/>
            <person name="Fraser A."/>
            <person name="Gentles S."/>
            <person name="Goble A."/>
            <person name="Hamlin N."/>
            <person name="Harris D.E."/>
            <person name="Hidalgo J."/>
            <person name="Hodgson G."/>
            <person name="Holroyd S."/>
            <person name="Hornsby T."/>
            <person name="Howarth S."/>
            <person name="Huckle E.J."/>
            <person name="Hunt S."/>
            <person name="Jagels K."/>
            <person name="James K.D."/>
            <person name="Jones L."/>
            <person name="Jones M."/>
            <person name="Leather S."/>
            <person name="McDonald S."/>
            <person name="McLean J."/>
            <person name="Mooney P."/>
            <person name="Moule S."/>
            <person name="Mungall K.L."/>
            <person name="Murphy L.D."/>
            <person name="Niblett D."/>
            <person name="Odell C."/>
            <person name="Oliver K."/>
            <person name="O'Neil S."/>
            <person name="Pearson D."/>
            <person name="Quail M.A."/>
            <person name="Rabbinowitsch E."/>
            <person name="Rutherford K.M."/>
            <person name="Rutter S."/>
            <person name="Saunders D."/>
            <person name="Seeger K."/>
            <person name="Sharp S."/>
            <person name="Skelton J."/>
            <person name="Simmonds M.N."/>
            <person name="Squares R."/>
            <person name="Squares S."/>
            <person name="Stevens K."/>
            <person name="Taylor K."/>
            <person name="Taylor R.G."/>
            <person name="Tivey A."/>
            <person name="Walsh S.V."/>
            <person name="Warren T."/>
            <person name="Whitehead S."/>
            <person name="Woodward J.R."/>
            <person name="Volckaert G."/>
            <person name="Aert R."/>
            <person name="Robben J."/>
            <person name="Grymonprez B."/>
            <person name="Weltjens I."/>
            <person name="Vanstreels E."/>
            <person name="Rieger M."/>
            <person name="Schaefer M."/>
            <person name="Mueller-Auer S."/>
            <person name="Gabel C."/>
            <person name="Fuchs M."/>
            <person name="Duesterhoeft A."/>
            <person name="Fritzc C."/>
            <person name="Holzer E."/>
            <person name="Moestl D."/>
            <person name="Hilbert H."/>
            <person name="Borzym K."/>
            <person name="Langer I."/>
            <person name="Beck A."/>
            <person name="Lehrach H."/>
            <person name="Reinhardt R."/>
            <person name="Pohl T.M."/>
            <person name="Eger P."/>
            <person name="Zimmermann W."/>
            <person name="Wedler H."/>
            <person name="Wambutt R."/>
            <person name="Purnelle B."/>
            <person name="Goffeau A."/>
            <person name="Cadieu E."/>
            <person name="Dreano S."/>
            <person name="Gloux S."/>
            <person name="Lelaure V."/>
            <person name="Mottier S."/>
            <person name="Galibert F."/>
            <person name="Aves S.J."/>
            <person name="Xiang Z."/>
            <person name="Hunt C."/>
            <person name="Moore K."/>
            <person name="Hurst S.M."/>
            <person name="Lucas M."/>
            <person name="Rochet M."/>
            <person name="Gaillardin C."/>
            <person name="Tallada V.A."/>
            <person name="Garzon A."/>
            <person name="Thode G."/>
            <person name="Daga R.R."/>
            <person name="Cruzado L."/>
            <person name="Jimenez J."/>
            <person name="Sanchez M."/>
            <person name="del Rey F."/>
            <person name="Benito J."/>
            <person name="Dominguez A."/>
            <person name="Revuelta J.L."/>
            <person name="Moreno S."/>
            <person name="Armstrong J."/>
            <person name="Forsburg S.L."/>
            <person name="Cerutti L."/>
            <person name="Lowe T."/>
            <person name="McCombie W.R."/>
            <person name="Paulsen I."/>
            <person name="Potashkin J."/>
            <person name="Shpakovski G.V."/>
            <person name="Ussery D."/>
            <person name="Barrell B.G."/>
            <person name="Nurse P."/>
        </authorList>
    </citation>
    <scope>NUCLEOTIDE SEQUENCE [LARGE SCALE GENOMIC DNA]</scope>
    <source>
        <strain>972 / ATCC 24843</strain>
    </source>
</reference>
<reference key="3">
    <citation type="journal article" date="2004" name="Mol. Cell">
        <title>An SMC-domain protein in fission yeast links telomeres to the meiotic centrosome.</title>
        <authorList>
            <person name="Flory M.R."/>
            <person name="Carson A.R."/>
            <person name="Muller E.G."/>
            <person name="Aebersold R."/>
        </authorList>
    </citation>
    <scope>INTERACTION WITH CCQ1</scope>
    <scope>SUBCELLULAR LOCATION</scope>
</reference>
<reference key="4">
    <citation type="journal article" date="2006" name="Nat. Biotechnol.">
        <title>ORFeome cloning and global analysis of protein localization in the fission yeast Schizosaccharomyces pombe.</title>
        <authorList>
            <person name="Matsuyama A."/>
            <person name="Arai R."/>
            <person name="Yashiroda Y."/>
            <person name="Shirai A."/>
            <person name="Kamata A."/>
            <person name="Sekido S."/>
            <person name="Kobayashi Y."/>
            <person name="Hashimoto A."/>
            <person name="Hamamoto M."/>
            <person name="Hiraoka Y."/>
            <person name="Horinouchi S."/>
            <person name="Yoshida M."/>
        </authorList>
    </citation>
    <scope>SUBCELLULAR LOCATION [LARGE SCALE ANALYSIS]</scope>
</reference>
<reference key="5">
    <citation type="journal article" date="2008" name="J. Proteome Res.">
        <title>Phosphoproteome analysis of fission yeast.</title>
        <authorList>
            <person name="Wilson-Grady J.T."/>
            <person name="Villen J."/>
            <person name="Gygi S.P."/>
        </authorList>
    </citation>
    <scope>PHOSPHORYLATION [LARGE SCALE ANALYSIS] AT SER-906</scope>
    <scope>IDENTIFICATION BY MASS SPECTROMETRY</scope>
</reference>
<gene>
    <name type="primary">pcp1</name>
    <name type="ORF">SPAC6G9.06c</name>
</gene>
<dbReference type="EMBL" id="CU329670">
    <property type="protein sequence ID" value="CAB03608.1"/>
    <property type="molecule type" value="Genomic_DNA"/>
</dbReference>
<dbReference type="EMBL" id="AF348506">
    <property type="protein sequence ID" value="AAK31344.1"/>
    <property type="molecule type" value="Genomic_DNA"/>
</dbReference>
<dbReference type="PIR" id="T39068">
    <property type="entry name" value="T39068"/>
</dbReference>
<dbReference type="RefSeq" id="NP_594115.1">
    <property type="nucleotide sequence ID" value="NM_001019539.2"/>
</dbReference>
<dbReference type="SMR" id="Q92351"/>
<dbReference type="BioGRID" id="277958">
    <property type="interactions" value="16"/>
</dbReference>
<dbReference type="FunCoup" id="Q92351">
    <property type="interactions" value="24"/>
</dbReference>
<dbReference type="IntAct" id="Q92351">
    <property type="interactions" value="4"/>
</dbReference>
<dbReference type="MINT" id="Q92351"/>
<dbReference type="STRING" id="284812.Q92351"/>
<dbReference type="iPTMnet" id="Q92351"/>
<dbReference type="PaxDb" id="4896-SPAC6G9.06c.1"/>
<dbReference type="EnsemblFungi" id="SPAC6G9.06c.1">
    <property type="protein sequence ID" value="SPAC6G9.06c.1:pep"/>
    <property type="gene ID" value="SPAC6G9.06c"/>
</dbReference>
<dbReference type="GeneID" id="2541455"/>
<dbReference type="KEGG" id="spo:2541455"/>
<dbReference type="PomBase" id="SPAC6G9.06c">
    <property type="gene designation" value="pcp1"/>
</dbReference>
<dbReference type="VEuPathDB" id="FungiDB:SPAC6G9.06c"/>
<dbReference type="eggNOG" id="ENOG502R0AV">
    <property type="taxonomic scope" value="Eukaryota"/>
</dbReference>
<dbReference type="HOGENOM" id="CLU_278102_0_0_1"/>
<dbReference type="InParanoid" id="Q92351"/>
<dbReference type="OMA" id="QETHAND"/>
<dbReference type="PhylomeDB" id="Q92351"/>
<dbReference type="CD-CODE" id="576F0A76">
    <property type="entry name" value="Centrosome"/>
</dbReference>
<dbReference type="PRO" id="PR:Q92351"/>
<dbReference type="Proteomes" id="UP000002485">
    <property type="component" value="Chromosome I"/>
</dbReference>
<dbReference type="GO" id="GO:0061493">
    <property type="term" value="C:central plaque of mitotic spindle pole body"/>
    <property type="evidence" value="ECO:0000314"/>
    <property type="project" value="PomBase"/>
</dbReference>
<dbReference type="GO" id="GO:0005737">
    <property type="term" value="C:cytoplasm"/>
    <property type="evidence" value="ECO:0000314"/>
    <property type="project" value="PomBase"/>
</dbReference>
<dbReference type="GO" id="GO:0035974">
    <property type="term" value="C:meiotic spindle pole body"/>
    <property type="evidence" value="ECO:0000314"/>
    <property type="project" value="PomBase"/>
</dbReference>
<dbReference type="GO" id="GO:0044732">
    <property type="term" value="C:mitotic spindle pole body"/>
    <property type="evidence" value="ECO:0000314"/>
    <property type="project" value="PomBase"/>
</dbReference>
<dbReference type="GO" id="GO:0071958">
    <property type="term" value="C:new mitotic spindle pole body"/>
    <property type="evidence" value="ECO:0000314"/>
    <property type="project" value="PomBase"/>
</dbReference>
<dbReference type="GO" id="GO:0110092">
    <property type="term" value="C:nucleus leading edge"/>
    <property type="evidence" value="ECO:0000314"/>
    <property type="project" value="PomBase"/>
</dbReference>
<dbReference type="GO" id="GO:0005516">
    <property type="term" value="F:calmodulin binding"/>
    <property type="evidence" value="ECO:0007669"/>
    <property type="project" value="UniProtKB-KW"/>
</dbReference>
<dbReference type="GO" id="GO:0140475">
    <property type="term" value="F:spindle pole body anchor activity"/>
    <property type="evidence" value="ECO:0000315"/>
    <property type="project" value="PomBase"/>
</dbReference>
<dbReference type="GO" id="GO:0061804">
    <property type="term" value="P:mitotic spindle formation (spindle phase one)"/>
    <property type="evidence" value="ECO:0000315"/>
    <property type="project" value="PomBase"/>
</dbReference>
<dbReference type="Gene3D" id="1.10.287.1490">
    <property type="match status" value="1"/>
</dbReference>
<dbReference type="InterPro" id="IPR012943">
    <property type="entry name" value="Cnn_1N"/>
</dbReference>
<dbReference type="InterPro" id="IPR019528">
    <property type="entry name" value="PACT_domain"/>
</dbReference>
<dbReference type="PANTHER" id="PTHR32083">
    <property type="entry name" value="CILIA AND FLAGELLA-ASSOCIATED PROTEIN 58-RELATED"/>
    <property type="match status" value="1"/>
</dbReference>
<dbReference type="PANTHER" id="PTHR32083:SF48">
    <property type="entry name" value="TRANS-GOLGI NETWORK-LOCALIZED SYP41-INTERACTING PROTEIN 1"/>
    <property type="match status" value="1"/>
</dbReference>
<dbReference type="Pfam" id="PF07989">
    <property type="entry name" value="Cnn_1N"/>
    <property type="match status" value="1"/>
</dbReference>
<dbReference type="Pfam" id="PF10495">
    <property type="entry name" value="PACT_coil_coil"/>
    <property type="match status" value="1"/>
</dbReference>
<organism>
    <name type="scientific">Schizosaccharomyces pombe (strain 972 / ATCC 24843)</name>
    <name type="common">Fission yeast</name>
    <dbReference type="NCBI Taxonomy" id="284812"/>
    <lineage>
        <taxon>Eukaryota</taxon>
        <taxon>Fungi</taxon>
        <taxon>Dikarya</taxon>
        <taxon>Ascomycota</taxon>
        <taxon>Taphrinomycotina</taxon>
        <taxon>Schizosaccharomycetes</taxon>
        <taxon>Schizosaccharomycetales</taxon>
        <taxon>Schizosaccharomycetaceae</taxon>
        <taxon>Schizosaccharomyces</taxon>
    </lineage>
</organism>
<evidence type="ECO:0000255" key="1"/>
<evidence type="ECO:0000256" key="2">
    <source>
        <dbReference type="SAM" id="MobiDB-lite"/>
    </source>
</evidence>
<evidence type="ECO:0000269" key="3">
    <source>
    </source>
</evidence>
<evidence type="ECO:0000269" key="4">
    <source>
    </source>
</evidence>
<evidence type="ECO:0000269" key="5">
    <source>
    </source>
</evidence>
<evidence type="ECO:0000269" key="6">
    <source>
    </source>
</evidence>
<comment type="function">
    <text evidence="3">Spindle pole body component that binds calmodulin. Overexpression of pcp1 causes the formation of supernumerary SPB-like structures and disrupts both mitotic spindle assembly and chromosome segregation.</text>
</comment>
<comment type="subunit">
    <text evidence="4">Interacts with ccq1.</text>
</comment>
<comment type="interaction">
    <interactant intactId="EBI-7633620">
        <id>Q92351</id>
    </interactant>
    <interactant intactId="EBI-1556697">
        <id>Q9URY2</id>
        <label>alp7</label>
    </interactant>
    <organismsDiffer>false</organismsDiffer>
    <experiments>3</experiments>
</comment>
<comment type="subcellular location">
    <subcellularLocation>
        <location evidence="3">Nucleus</location>
    </subcellularLocation>
    <subcellularLocation>
        <location evidence="3 4 5">Cytoplasm</location>
        <location evidence="3 4 5">Cytoskeleton</location>
        <location evidence="3 4 5">Microtubule organizing center</location>
        <location evidence="3 4 5">Spindle pole body</location>
    </subcellularLocation>
</comment>
<accession>Q92351</accession>
<protein>
    <recommendedName>
        <fullName>Spindle pole body protein pcp1</fullName>
    </recommendedName>
</protein>
<sequence>MSERDFNTQSPKFKDENANSVISQSDFLGKSLKNNNDDYSDFRGSYLNDKSSFQTPLRNGSYQPKGSLEFTPLLQSSNKNSDKYNGSLGDKGSFDPNSYGLSAISKQATQEALSISQGNDSYDVSKLTDLSKNSEIDHTDGELPANAALTLREQEKVLEKVSRENFGLRIKIVCLEKRLESMAPEQIKEAVKDNVELHAERANLQLQLKRTESLLQKSEDKNFKLEEKVDYLSKVNDVEQSQNVKVFTERIRFLENALEKVQREKDSLSTEMEEDKSNKEVDYEYEIRQLQNRLDELSEELDVAQDLLTEKEDEIATLKRQIEEKENSSSAFENEENSSYVHLQEDYAILQAKCDEFADRIQVLTADLEKEKENQIMHESEASIGLTDSMQVHTLQEQLHKANEEIEFLHDQISRMNEEGKNFEDIMLQFRSLEEERDVLESKLQTLEDDNNSLRLMTSSLGNQIESLRTQNREIDEEKNHLRLLASKNSDKALAETNIRLQEVTKELETLRMKNSNDLNEIHDLREENEGLTLKIDSITKEKDRLINELEQRIKSYEVNVSELNGTIDEYRNKLKDKEETYNEVMNAFQYKDNDLRRFHESINKLQDREKELTSNLEKKNLVISSLRETVAMLEKERESIKKYLSGNAKDLDNTNLMEILNDKISVLQRQLTDVKDELDVSEEEREEAIVAGQKLSASFELMSNEKQALELKYSSLKNELINAQNLLDRREEELSELSKKLFEERKIRSGSNDDIEKNKEINVLNSELADKLAQIRHLESDKMELDKLVHHLNRGIEEANIEENAVKKRLCLLMGCDYSSVSILQIVSQIEHFVNQQIQTIRSLKQELRHDFVQFSGKKEQELSRSFEKFGLGTETKHDILAQRNRNVSEKMNDLENAAQKFFSSPDRKNGYLYPSEHTSKIEYLEKTIEDLKLALQDELKNRNLLMDDISSYNKQTTKLQEKIKWLERERSILIDELESYRSNQFNYQNNLVQDKNELEERLKEIQKELEVYNNHFMKQAELMTSNVTDESQLMLKTLREALQSKTNNIDHLSTILERNRKEYKSLLDDYNQLRARYKNLQSNTPQSTQSGQYESEIKGLSKLTKYLQSKCRREHSLRLDLAFSKKFILMQLTGYETCNKINLRMLQKIGISPDPDLSKKHIKLKSLIIVVCSIERMKRMKNEWLKQAQLKQSLQRAAAKAKTANY</sequence>
<keyword id="KW-0112">Calmodulin-binding</keyword>
<keyword id="KW-0175">Coiled coil</keyword>
<keyword id="KW-0963">Cytoplasm</keyword>
<keyword id="KW-0206">Cytoskeleton</keyword>
<keyword id="KW-0539">Nucleus</keyword>
<keyword id="KW-0597">Phosphoprotein</keyword>
<keyword id="KW-1185">Reference proteome</keyword>
<name>PCP1_SCHPO</name>
<feature type="chain" id="PRO_0000058259" description="Spindle pole body protein pcp1">
    <location>
        <begin position="1"/>
        <end position="1208"/>
    </location>
</feature>
<feature type="region of interest" description="Disordered" evidence="2">
    <location>
        <begin position="1"/>
        <end position="91"/>
    </location>
</feature>
<feature type="coiled-coil region" evidence="1">
    <location>
        <begin position="151"/>
        <end position="375"/>
    </location>
</feature>
<feature type="coiled-coil region" evidence="1">
    <location>
        <begin position="387"/>
        <end position="803"/>
    </location>
</feature>
<feature type="coiled-coil region" evidence="1">
    <location>
        <begin position="874"/>
        <end position="1091"/>
    </location>
</feature>
<feature type="coiled-coil region" evidence="1">
    <location>
        <begin position="1177"/>
        <end position="1204"/>
    </location>
</feature>
<feature type="compositionally biased region" description="Basic and acidic residues" evidence="2">
    <location>
        <begin position="1"/>
        <end position="17"/>
    </location>
</feature>
<feature type="compositionally biased region" description="Polar residues" evidence="2">
    <location>
        <begin position="48"/>
        <end position="64"/>
    </location>
</feature>
<feature type="modified residue" description="Phosphoserine" evidence="6">
    <location>
        <position position="906"/>
    </location>
</feature>